<organism>
    <name type="scientific">Salmonella agona (strain SL483)</name>
    <dbReference type="NCBI Taxonomy" id="454166"/>
    <lineage>
        <taxon>Bacteria</taxon>
        <taxon>Pseudomonadati</taxon>
        <taxon>Pseudomonadota</taxon>
        <taxon>Gammaproteobacteria</taxon>
        <taxon>Enterobacterales</taxon>
        <taxon>Enterobacteriaceae</taxon>
        <taxon>Salmonella</taxon>
    </lineage>
</organism>
<sequence length="383" mass="42216">MKNILPPFIEIYRALIATPSISATEESLDQSNASLITLLAGWFSDLGFNVEVQPVPGTRNKFNMLASTGHGAGGLLLTGHTDTVPFDDGRWTRDPFTLTEHDNKLYGLGTADMKGFFAFILDALRDVDVTKLKKPLYILATADEETSMAGARYFSETTALRPDCAIIGEPTSLQPIRAHKGHISNVVRVLGQSGHSSDPARGVNAIELMHDAIGHIMQLRDSLKARYHYEAFTVPYPTLNLGHIHGGDASNRICACCELHMDIRPLPGMTLNDLNGLLNDALAPVSERWPGRLTVAELHPPIPGYECPPDHQLVEVVEKLLGTKTDVVNYCTEAPFMQTLCPTLVLGPGSINQAHQPDEYLETRFIKPTRELITQVVHHFCWH</sequence>
<gene>
    <name evidence="1" type="primary">argE</name>
    <name type="ordered locus">SeAg_B4361</name>
</gene>
<keyword id="KW-0028">Amino-acid biosynthesis</keyword>
<keyword id="KW-0055">Arginine biosynthesis</keyword>
<keyword id="KW-0170">Cobalt</keyword>
<keyword id="KW-0963">Cytoplasm</keyword>
<keyword id="KW-0378">Hydrolase</keyword>
<keyword id="KW-0479">Metal-binding</keyword>
<keyword id="KW-0862">Zinc</keyword>
<reference key="1">
    <citation type="journal article" date="2011" name="J. Bacteriol.">
        <title>Comparative genomics of 28 Salmonella enterica isolates: evidence for CRISPR-mediated adaptive sublineage evolution.</title>
        <authorList>
            <person name="Fricke W.F."/>
            <person name="Mammel M.K."/>
            <person name="McDermott P.F."/>
            <person name="Tartera C."/>
            <person name="White D.G."/>
            <person name="Leclerc J.E."/>
            <person name="Ravel J."/>
            <person name="Cebula T.A."/>
        </authorList>
    </citation>
    <scope>NUCLEOTIDE SEQUENCE [LARGE SCALE GENOMIC DNA]</scope>
    <source>
        <strain>SL483</strain>
    </source>
</reference>
<protein>
    <recommendedName>
        <fullName evidence="1">Acetylornithine deacetylase</fullName>
        <shortName evidence="1">AO</shortName>
        <shortName evidence="1">Acetylornithinase</shortName>
        <ecNumber evidence="1">3.5.1.16</ecNumber>
    </recommendedName>
    <alternativeName>
        <fullName evidence="1">N-acetylornithinase</fullName>
        <shortName evidence="1">NAO</shortName>
    </alternativeName>
</protein>
<dbReference type="EC" id="3.5.1.16" evidence="1"/>
<dbReference type="EMBL" id="CP001138">
    <property type="protein sequence ID" value="ACH51371.1"/>
    <property type="molecule type" value="Genomic_DNA"/>
</dbReference>
<dbReference type="RefSeq" id="WP_000789870.1">
    <property type="nucleotide sequence ID" value="NC_011149.1"/>
</dbReference>
<dbReference type="SMR" id="B5F0U6"/>
<dbReference type="MEROPS" id="M20.974"/>
<dbReference type="KEGG" id="sea:SeAg_B4361"/>
<dbReference type="HOGENOM" id="CLU_021802_2_4_6"/>
<dbReference type="UniPathway" id="UPA00068">
    <property type="reaction ID" value="UER00110"/>
</dbReference>
<dbReference type="Proteomes" id="UP000008819">
    <property type="component" value="Chromosome"/>
</dbReference>
<dbReference type="GO" id="GO:0005737">
    <property type="term" value="C:cytoplasm"/>
    <property type="evidence" value="ECO:0007669"/>
    <property type="project" value="UniProtKB-SubCell"/>
</dbReference>
<dbReference type="GO" id="GO:0008777">
    <property type="term" value="F:acetylornithine deacetylase activity"/>
    <property type="evidence" value="ECO:0007669"/>
    <property type="project" value="UniProtKB-UniRule"/>
</dbReference>
<dbReference type="GO" id="GO:0008270">
    <property type="term" value="F:zinc ion binding"/>
    <property type="evidence" value="ECO:0007669"/>
    <property type="project" value="UniProtKB-UniRule"/>
</dbReference>
<dbReference type="GO" id="GO:0006526">
    <property type="term" value="P:L-arginine biosynthetic process"/>
    <property type="evidence" value="ECO:0007669"/>
    <property type="project" value="UniProtKB-UniRule"/>
</dbReference>
<dbReference type="CDD" id="cd03894">
    <property type="entry name" value="M20_ArgE"/>
    <property type="match status" value="1"/>
</dbReference>
<dbReference type="FunFam" id="3.30.70.360:FF:000003">
    <property type="entry name" value="Acetylornithine deacetylase"/>
    <property type="match status" value="1"/>
</dbReference>
<dbReference type="Gene3D" id="3.30.70.360">
    <property type="match status" value="1"/>
</dbReference>
<dbReference type="Gene3D" id="3.40.630.10">
    <property type="entry name" value="Zn peptidases"/>
    <property type="match status" value="1"/>
</dbReference>
<dbReference type="HAMAP" id="MF_01108">
    <property type="entry name" value="ArgE"/>
    <property type="match status" value="1"/>
</dbReference>
<dbReference type="InterPro" id="IPR010169">
    <property type="entry name" value="AcOrn-deacetyl"/>
</dbReference>
<dbReference type="InterPro" id="IPR001261">
    <property type="entry name" value="ArgE/DapE_CS"/>
</dbReference>
<dbReference type="InterPro" id="IPR036264">
    <property type="entry name" value="Bact_exopeptidase_dim_dom"/>
</dbReference>
<dbReference type="InterPro" id="IPR002933">
    <property type="entry name" value="Peptidase_M20"/>
</dbReference>
<dbReference type="InterPro" id="IPR011650">
    <property type="entry name" value="Peptidase_M20_dimer"/>
</dbReference>
<dbReference type="InterPro" id="IPR050072">
    <property type="entry name" value="Peptidase_M20A"/>
</dbReference>
<dbReference type="NCBIfam" id="TIGR01892">
    <property type="entry name" value="AcOrn-deacetyl"/>
    <property type="match status" value="1"/>
</dbReference>
<dbReference type="NCBIfam" id="NF003474">
    <property type="entry name" value="PRK05111.1"/>
    <property type="match status" value="1"/>
</dbReference>
<dbReference type="PANTHER" id="PTHR43808">
    <property type="entry name" value="ACETYLORNITHINE DEACETYLASE"/>
    <property type="match status" value="1"/>
</dbReference>
<dbReference type="PANTHER" id="PTHR43808:SF1">
    <property type="entry name" value="ACETYLORNITHINE DEACETYLASE"/>
    <property type="match status" value="1"/>
</dbReference>
<dbReference type="Pfam" id="PF07687">
    <property type="entry name" value="M20_dimer"/>
    <property type="match status" value="1"/>
</dbReference>
<dbReference type="Pfam" id="PF01546">
    <property type="entry name" value="Peptidase_M20"/>
    <property type="match status" value="1"/>
</dbReference>
<dbReference type="SUPFAM" id="SSF55031">
    <property type="entry name" value="Bacterial exopeptidase dimerisation domain"/>
    <property type="match status" value="1"/>
</dbReference>
<dbReference type="SUPFAM" id="SSF53187">
    <property type="entry name" value="Zn-dependent exopeptidases"/>
    <property type="match status" value="1"/>
</dbReference>
<dbReference type="PROSITE" id="PS00758">
    <property type="entry name" value="ARGE_DAPE_CPG2_1"/>
    <property type="match status" value="1"/>
</dbReference>
<dbReference type="PROSITE" id="PS00759">
    <property type="entry name" value="ARGE_DAPE_CPG2_2"/>
    <property type="match status" value="1"/>
</dbReference>
<proteinExistence type="inferred from homology"/>
<accession>B5F0U6</accession>
<feature type="chain" id="PRO_1000137073" description="Acetylornithine deacetylase">
    <location>
        <begin position="1"/>
        <end position="383"/>
    </location>
</feature>
<feature type="active site" evidence="1">
    <location>
        <position position="82"/>
    </location>
</feature>
<feature type="active site" evidence="1">
    <location>
        <position position="144"/>
    </location>
</feature>
<feature type="binding site" evidence="1">
    <location>
        <position position="80"/>
    </location>
    <ligand>
        <name>Zn(2+)</name>
        <dbReference type="ChEBI" id="CHEBI:29105"/>
        <label>1</label>
    </ligand>
</feature>
<feature type="binding site" evidence="1">
    <location>
        <position position="112"/>
    </location>
    <ligand>
        <name>Zn(2+)</name>
        <dbReference type="ChEBI" id="CHEBI:29105"/>
        <label>1</label>
    </ligand>
</feature>
<feature type="binding site" evidence="1">
    <location>
        <position position="112"/>
    </location>
    <ligand>
        <name>Zn(2+)</name>
        <dbReference type="ChEBI" id="CHEBI:29105"/>
        <label>2</label>
    </ligand>
</feature>
<feature type="binding site" evidence="1">
    <location>
        <position position="145"/>
    </location>
    <ligand>
        <name>Zn(2+)</name>
        <dbReference type="ChEBI" id="CHEBI:29105"/>
        <label>2</label>
    </ligand>
</feature>
<feature type="binding site" evidence="1">
    <location>
        <position position="169"/>
    </location>
    <ligand>
        <name>Zn(2+)</name>
        <dbReference type="ChEBI" id="CHEBI:29105"/>
        <label>1</label>
    </ligand>
</feature>
<feature type="binding site" evidence="1">
    <location>
        <position position="355"/>
    </location>
    <ligand>
        <name>Zn(2+)</name>
        <dbReference type="ChEBI" id="CHEBI:29105"/>
        <label>2</label>
    </ligand>
</feature>
<comment type="function">
    <text evidence="1">Catalyzes the hydrolysis of the amide bond of N(2)-acetylated L-amino acids. Cleaves the acetyl group from N-acetyl-L-ornithine to form L-ornithine, an intermediate in L-arginine biosynthesis pathway, and a branchpoint in the synthesis of polyamines.</text>
</comment>
<comment type="catalytic activity">
    <reaction evidence="1">
        <text>N(2)-acetyl-L-ornithine + H2O = L-ornithine + acetate</text>
        <dbReference type="Rhea" id="RHEA:15941"/>
        <dbReference type="ChEBI" id="CHEBI:15377"/>
        <dbReference type="ChEBI" id="CHEBI:30089"/>
        <dbReference type="ChEBI" id="CHEBI:46911"/>
        <dbReference type="ChEBI" id="CHEBI:57805"/>
        <dbReference type="EC" id="3.5.1.16"/>
    </reaction>
</comment>
<comment type="cofactor">
    <cofactor evidence="1">
        <name>Zn(2+)</name>
        <dbReference type="ChEBI" id="CHEBI:29105"/>
    </cofactor>
    <cofactor evidence="1">
        <name>Co(2+)</name>
        <dbReference type="ChEBI" id="CHEBI:48828"/>
    </cofactor>
    <text evidence="1">Binds 2 Zn(2+) or Co(2+) ions per subunit.</text>
</comment>
<comment type="cofactor">
    <cofactor evidence="1">
        <name>glutathione</name>
        <dbReference type="ChEBI" id="CHEBI:57925"/>
    </cofactor>
</comment>
<comment type="pathway">
    <text evidence="1">Amino-acid biosynthesis; L-arginine biosynthesis; L-ornithine from N(2)-acetyl-L-ornithine (linear): step 1/1.</text>
</comment>
<comment type="subunit">
    <text evidence="1">Homodimer.</text>
</comment>
<comment type="subcellular location">
    <subcellularLocation>
        <location evidence="1">Cytoplasm</location>
    </subcellularLocation>
</comment>
<comment type="similarity">
    <text evidence="1">Belongs to the peptidase M20A family. ArgE subfamily.</text>
</comment>
<name>ARGE_SALA4</name>
<evidence type="ECO:0000255" key="1">
    <source>
        <dbReference type="HAMAP-Rule" id="MF_01108"/>
    </source>
</evidence>